<organism evidence="7">
    <name type="scientific">Aedes aegypti</name>
    <name type="common">Yellowfever mosquito</name>
    <name type="synonym">Culex aegypti</name>
    <dbReference type="NCBI Taxonomy" id="7159"/>
    <lineage>
        <taxon>Eukaryota</taxon>
        <taxon>Metazoa</taxon>
        <taxon>Ecdysozoa</taxon>
        <taxon>Arthropoda</taxon>
        <taxon>Hexapoda</taxon>
        <taxon>Insecta</taxon>
        <taxon>Pterygota</taxon>
        <taxon>Neoptera</taxon>
        <taxon>Endopterygota</taxon>
        <taxon>Diptera</taxon>
        <taxon>Nematocera</taxon>
        <taxon>Culicoidea</taxon>
        <taxon>Culicidae</taxon>
        <taxon>Culicinae</taxon>
        <taxon>Aedini</taxon>
        <taxon>Aedes</taxon>
        <taxon>Stegomyia</taxon>
    </lineage>
</organism>
<keyword id="KW-0391">Immunity</keyword>
<keyword id="KW-1185">Reference proteome</keyword>
<keyword id="KW-0964">Secreted</keyword>
<keyword id="KW-0732">Signal</keyword>
<dbReference type="RefSeq" id="XP_001660690.2">
    <property type="nucleotide sequence ID" value="XM_001660640.2"/>
</dbReference>
<dbReference type="SMR" id="A0A1S4FQ37"/>
<dbReference type="EnsemblMetazoa" id="AAEL010228-RA">
    <property type="protein sequence ID" value="AAEL010228-PA"/>
    <property type="gene ID" value="AAEL010228"/>
</dbReference>
<dbReference type="GeneID" id="5580038"/>
<dbReference type="VEuPathDB" id="VectorBase:AAEL010228"/>
<dbReference type="InParanoid" id="A0A1S4FQ37"/>
<dbReference type="OrthoDB" id="7744424at2759"/>
<dbReference type="Proteomes" id="UP000008820">
    <property type="component" value="Chromosome 2"/>
</dbReference>
<dbReference type="GO" id="GO:0005576">
    <property type="term" value="C:extracellular region"/>
    <property type="evidence" value="ECO:0007669"/>
    <property type="project" value="UniProtKB-SubCell"/>
</dbReference>
<dbReference type="GO" id="GO:0002376">
    <property type="term" value="P:immune system process"/>
    <property type="evidence" value="ECO:0007669"/>
    <property type="project" value="UniProtKB-KW"/>
</dbReference>
<dbReference type="InterPro" id="IPR056799">
    <property type="entry name" value="ALL3/gSG7_salivary-like_helix"/>
</dbReference>
<dbReference type="Pfam" id="PF25001">
    <property type="entry name" value="Aegyptin_C"/>
    <property type="match status" value="1"/>
</dbReference>
<comment type="function">
    <text evidence="3">Induces expression of IL4 in host skin by diverting host CD4 cells away from Th1 and towards Th2 responsiveness (PubMed:19493208). Induces expression of IL10 in host skin (PubMed:19493208). Down-regulates expression of IL12B, IFN-gamma (IFNG) and TNF-alpha (TNF) in host skin (PubMed:19493208).</text>
</comment>
<comment type="subcellular location">
    <subcellularLocation>
        <location evidence="6">Secreted</location>
    </subcellularLocation>
</comment>
<comment type="tissue specificity">
    <text evidence="4">Salivary gland (at protein level).</text>
</comment>
<protein>
    <recommendedName>
        <fullName evidence="5">Salivary IL-4-inducing protein</fullName>
    </recommendedName>
    <alternativeName>
        <fullName evidence="5">P5F9</fullName>
    </alternativeName>
    <alternativeName>
        <fullName evidence="5">SAAG-4</fullName>
    </alternativeName>
</protein>
<reference evidence="7" key="1">
    <citation type="journal article" date="2018" name="Nature">
        <title>Improved reference genome of Aedes aegypti informs arbovirus vector control.</title>
        <authorList>
            <person name="Matthews B.J."/>
            <person name="Dudchenko O."/>
            <person name="Kingan S.B."/>
            <person name="Koren S."/>
            <person name="Antoshechkin I."/>
            <person name="Crawford J.E."/>
            <person name="Glassford W.J."/>
            <person name="Herre M."/>
            <person name="Redmond S.N."/>
            <person name="Rose N.H."/>
            <person name="Weedall G.D."/>
            <person name="Wu Y."/>
            <person name="Batra S.S."/>
            <person name="Brito-Sierra C.A."/>
            <person name="Buckingham S.D."/>
            <person name="Campbell C.L."/>
            <person name="Chan S."/>
            <person name="Cox E."/>
            <person name="Evans B.R."/>
            <person name="Fansiri T."/>
            <person name="Filipovic I."/>
            <person name="Fontaine A."/>
            <person name="Gloria-Soria A."/>
            <person name="Hall R."/>
            <person name="Joardar V.S."/>
            <person name="Jones A.K."/>
            <person name="Kay R.G.G."/>
            <person name="Kodali V.K."/>
            <person name="Lee J."/>
            <person name="Lycett G.J."/>
            <person name="Mitchell S.N."/>
            <person name="Muehling J."/>
            <person name="Murphy M.R."/>
            <person name="Omer A.D."/>
            <person name="Partridge F.A."/>
            <person name="Peluso P."/>
            <person name="Aiden A.P."/>
            <person name="Ramasamy V."/>
            <person name="Rasic G."/>
            <person name="Roy S."/>
            <person name="Saavedra-Rodriguez K."/>
            <person name="Sharan S."/>
            <person name="Sharma A."/>
            <person name="Smith M.L."/>
            <person name="Turner J."/>
            <person name="Weakley A.M."/>
            <person name="Zhao Z."/>
            <person name="Akbari O.S."/>
            <person name="Black W.C. IV"/>
            <person name="Cao H."/>
            <person name="Darby A.C."/>
            <person name="Hill C.A."/>
            <person name="Johnston J.S."/>
            <person name="Murphy T.D."/>
            <person name="Raikhel A.S."/>
            <person name="Sattelle D.B."/>
            <person name="Sharakhov I.V."/>
            <person name="White B.J."/>
            <person name="Zhao L."/>
            <person name="Aiden E.L."/>
            <person name="Mann R.S."/>
            <person name="Lambrechts L."/>
            <person name="Powell J.R."/>
            <person name="Sharakhova M.V."/>
            <person name="Tu Z."/>
            <person name="Robertson H.M."/>
            <person name="McBride C.S."/>
            <person name="Hastie A.R."/>
            <person name="Korlach J."/>
            <person name="Neafsey D.E."/>
            <person name="Phillippy A.M."/>
            <person name="Vosshall L.B."/>
        </authorList>
    </citation>
    <scope>NUCLEOTIDE SEQUENCE [LARGE SCALE GENOMIC DNA]</scope>
    <source>
        <strain evidence="7">LVP_AGWG</strain>
    </source>
</reference>
<reference evidence="6" key="2">
    <citation type="journal article" date="2009" name="Parasite Immunol.">
        <title>SAAG-4 is a novel mosquito salivary protein that programmes host CD4 T cells to express IL-4.</title>
        <authorList>
            <person name="Boppana V.D."/>
            <person name="Thangamani S."/>
            <person name="Adler A.J."/>
            <person name="Wikel S.K."/>
        </authorList>
    </citation>
    <scope>FUNCTION</scope>
</reference>
<reference key="3">
    <citation type="journal article" date="2021" name="Sci. Rep.">
        <title>High resolution proteomics of Aedes aegypti salivary glands infected with either dengue, Zika or chikungunya viruses identify new virus specific and broad antiviral factors.</title>
        <authorList>
            <person name="Chowdhury A."/>
            <person name="Modahl C.M."/>
            <person name="Misse D."/>
            <person name="Kini R.M."/>
            <person name="Pompon J."/>
        </authorList>
    </citation>
    <scope>IDENTIFICATION BY MASS SPECTROMETRY</scope>
    <scope>TISSUE SPECIFICITY</scope>
</reference>
<proteinExistence type="evidence at protein level"/>
<sequence length="219" mass="23956">MKYLLTLLMALSLVNLMLTRPTPEDDGGTSEEPQTQETTGETTGSDEKKGASEEPNADDASKTDDVEEKGDDDTAKKEDDGESKDGEGSEKSDKEKGEPKNDPRETYNKVIEQLDQIKVDNVEDGHERSELAADIQRYLRNPIVDVIGSAGDFSKIAKCFKSMVGDAKKAIEEDVKGFKECTAKKDSNAYQCSQDRSTVQDKIAKMSSKIASCVASNRS</sequence>
<accession>A0A1S4FQ37</accession>
<feature type="signal peptide" evidence="1">
    <location>
        <begin position="1"/>
        <end position="19"/>
    </location>
</feature>
<feature type="chain" id="PRO_0000461067" description="Salivary IL-4-inducing protein" evidence="1">
    <location>
        <begin position="20"/>
        <end position="219"/>
    </location>
</feature>
<feature type="region of interest" description="Disordered" evidence="2">
    <location>
        <begin position="19"/>
        <end position="109"/>
    </location>
</feature>
<feature type="compositionally biased region" description="Low complexity" evidence="2">
    <location>
        <begin position="30"/>
        <end position="43"/>
    </location>
</feature>
<feature type="compositionally biased region" description="Basic and acidic residues" evidence="2">
    <location>
        <begin position="72"/>
        <end position="107"/>
    </location>
</feature>
<evidence type="ECO:0000255" key="1"/>
<evidence type="ECO:0000256" key="2">
    <source>
        <dbReference type="SAM" id="MobiDB-lite"/>
    </source>
</evidence>
<evidence type="ECO:0000269" key="3">
    <source>
    </source>
</evidence>
<evidence type="ECO:0000269" key="4">
    <source>
    </source>
</evidence>
<evidence type="ECO:0000303" key="5">
    <source>
    </source>
</evidence>
<evidence type="ECO:0000305" key="6"/>
<evidence type="ECO:0000312" key="7">
    <source>
        <dbReference type="Proteomes" id="UP000008820"/>
    </source>
</evidence>
<name>SAAG4_AEDAE</name>